<keyword id="KW-0067">ATP-binding</keyword>
<keyword id="KW-0131">Cell cycle</keyword>
<keyword id="KW-0132">Cell division</keyword>
<keyword id="KW-0133">Cell shape</keyword>
<keyword id="KW-0961">Cell wall biogenesis/degradation</keyword>
<keyword id="KW-0963">Cytoplasm</keyword>
<keyword id="KW-0436">Ligase</keyword>
<keyword id="KW-0547">Nucleotide-binding</keyword>
<keyword id="KW-0573">Peptidoglycan synthesis</keyword>
<evidence type="ECO:0000255" key="1">
    <source>
        <dbReference type="HAMAP-Rule" id="MF_00639"/>
    </source>
</evidence>
<comment type="function">
    <text evidence="1">Cell wall formation. Catalyzes the addition of glutamate to the nucleotide precursor UDP-N-acetylmuramoyl-L-alanine (UMA).</text>
</comment>
<comment type="catalytic activity">
    <reaction evidence="1">
        <text>UDP-N-acetyl-alpha-D-muramoyl-L-alanine + D-glutamate + ATP = UDP-N-acetyl-alpha-D-muramoyl-L-alanyl-D-glutamate + ADP + phosphate + H(+)</text>
        <dbReference type="Rhea" id="RHEA:16429"/>
        <dbReference type="ChEBI" id="CHEBI:15378"/>
        <dbReference type="ChEBI" id="CHEBI:29986"/>
        <dbReference type="ChEBI" id="CHEBI:30616"/>
        <dbReference type="ChEBI" id="CHEBI:43474"/>
        <dbReference type="ChEBI" id="CHEBI:83898"/>
        <dbReference type="ChEBI" id="CHEBI:83900"/>
        <dbReference type="ChEBI" id="CHEBI:456216"/>
        <dbReference type="EC" id="6.3.2.9"/>
    </reaction>
</comment>
<comment type="pathway">
    <text evidence="1">Cell wall biogenesis; peptidoglycan biosynthesis.</text>
</comment>
<comment type="subcellular location">
    <subcellularLocation>
        <location evidence="1">Cytoplasm</location>
    </subcellularLocation>
</comment>
<comment type="similarity">
    <text evidence="1">Belongs to the MurCDEF family.</text>
</comment>
<organism>
    <name type="scientific">Bacillus cytotoxicus (strain DSM 22905 / CIP 110041 / 391-98 / NVH 391-98)</name>
    <dbReference type="NCBI Taxonomy" id="315749"/>
    <lineage>
        <taxon>Bacteria</taxon>
        <taxon>Bacillati</taxon>
        <taxon>Bacillota</taxon>
        <taxon>Bacilli</taxon>
        <taxon>Bacillales</taxon>
        <taxon>Bacillaceae</taxon>
        <taxon>Bacillus</taxon>
        <taxon>Bacillus cereus group</taxon>
    </lineage>
</organism>
<feature type="chain" id="PRO_1000082676" description="UDP-N-acetylmuramoylalanine--D-glutamate ligase">
    <location>
        <begin position="1"/>
        <end position="451"/>
    </location>
</feature>
<feature type="binding site" evidence="1">
    <location>
        <begin position="119"/>
        <end position="125"/>
    </location>
    <ligand>
        <name>ATP</name>
        <dbReference type="ChEBI" id="CHEBI:30616"/>
    </ligand>
</feature>
<sequence>MKTVTDYQNKNILVLGIAKSGYAAANLLKSLGANVIVNDGKPLANNELAAELQAKGMDVVCGGHPLELLERNIALVVKNPGIPYSNPLLVAATEKQIPIITEIELAYRISEAPFIGITGSNGKTTTTMLTFEMLKEGEKHPAIAGNIGTVACEVAQAAKANEVLVTELSSFQLMGVETFQPKIAAFLNLFEAHLDYHGTKKEYGLAKANIFKNQTAADYSVINADDADVMELSANSKGQKILFSTTKEIEDGACIKENALYFKGEKVVEIKDIVLPGKHNLENILAAMSIAKLLGVANEAIVAVLKRFTGVKHRLEYVTTIHNRKFYNDSKATNILATEKALSAFTSPVILLAGGLDRGNEFDDLIPYFEQHVKAIVTYGQTAPKLVHAAEKAGLAIIEAVHHLEEAVERAYAHSADGDVILLSPACASWDQFKTFEERGDIFIQAVHKLI</sequence>
<gene>
    <name evidence="1" type="primary">murD</name>
    <name type="ordered locus">Bcer98_2562</name>
</gene>
<accession>A7GRN8</accession>
<name>MURD_BACCN</name>
<proteinExistence type="inferred from homology"/>
<reference key="1">
    <citation type="journal article" date="2008" name="Chem. Biol. Interact.">
        <title>Extending the Bacillus cereus group genomics to putative food-borne pathogens of different toxicity.</title>
        <authorList>
            <person name="Lapidus A."/>
            <person name="Goltsman E."/>
            <person name="Auger S."/>
            <person name="Galleron N."/>
            <person name="Segurens B."/>
            <person name="Dossat C."/>
            <person name="Land M.L."/>
            <person name="Broussolle V."/>
            <person name="Brillard J."/>
            <person name="Guinebretiere M.-H."/>
            <person name="Sanchis V."/>
            <person name="Nguen-the C."/>
            <person name="Lereclus D."/>
            <person name="Richardson P."/>
            <person name="Wincker P."/>
            <person name="Weissenbach J."/>
            <person name="Ehrlich S.D."/>
            <person name="Sorokin A."/>
        </authorList>
    </citation>
    <scope>NUCLEOTIDE SEQUENCE [LARGE SCALE GENOMIC DNA]</scope>
    <source>
        <strain>DSM 22905 / CIP 110041 / 391-98 / NVH 391-98</strain>
    </source>
</reference>
<protein>
    <recommendedName>
        <fullName evidence="1">UDP-N-acetylmuramoylalanine--D-glutamate ligase</fullName>
        <ecNumber evidence="1">6.3.2.9</ecNumber>
    </recommendedName>
    <alternativeName>
        <fullName evidence="1">D-glutamic acid-adding enzyme</fullName>
    </alternativeName>
    <alternativeName>
        <fullName evidence="1">UDP-N-acetylmuramoyl-L-alanyl-D-glutamate synthetase</fullName>
    </alternativeName>
</protein>
<dbReference type="EC" id="6.3.2.9" evidence="1"/>
<dbReference type="EMBL" id="CP000764">
    <property type="protein sequence ID" value="ABS22796.1"/>
    <property type="molecule type" value="Genomic_DNA"/>
</dbReference>
<dbReference type="RefSeq" id="WP_012095003.1">
    <property type="nucleotide sequence ID" value="NC_009674.1"/>
</dbReference>
<dbReference type="SMR" id="A7GRN8"/>
<dbReference type="STRING" id="315749.Bcer98_2562"/>
<dbReference type="GeneID" id="33897815"/>
<dbReference type="KEGG" id="bcy:Bcer98_2562"/>
<dbReference type="eggNOG" id="COG0771">
    <property type="taxonomic scope" value="Bacteria"/>
</dbReference>
<dbReference type="HOGENOM" id="CLU_032540_0_1_9"/>
<dbReference type="OrthoDB" id="9809796at2"/>
<dbReference type="UniPathway" id="UPA00219"/>
<dbReference type="Proteomes" id="UP000002300">
    <property type="component" value="Chromosome"/>
</dbReference>
<dbReference type="GO" id="GO:0005737">
    <property type="term" value="C:cytoplasm"/>
    <property type="evidence" value="ECO:0007669"/>
    <property type="project" value="UniProtKB-SubCell"/>
</dbReference>
<dbReference type="GO" id="GO:0005524">
    <property type="term" value="F:ATP binding"/>
    <property type="evidence" value="ECO:0007669"/>
    <property type="project" value="UniProtKB-UniRule"/>
</dbReference>
<dbReference type="GO" id="GO:0008764">
    <property type="term" value="F:UDP-N-acetylmuramoylalanine-D-glutamate ligase activity"/>
    <property type="evidence" value="ECO:0007669"/>
    <property type="project" value="UniProtKB-UniRule"/>
</dbReference>
<dbReference type="GO" id="GO:0051301">
    <property type="term" value="P:cell division"/>
    <property type="evidence" value="ECO:0007669"/>
    <property type="project" value="UniProtKB-KW"/>
</dbReference>
<dbReference type="GO" id="GO:0071555">
    <property type="term" value="P:cell wall organization"/>
    <property type="evidence" value="ECO:0007669"/>
    <property type="project" value="UniProtKB-KW"/>
</dbReference>
<dbReference type="GO" id="GO:0009252">
    <property type="term" value="P:peptidoglycan biosynthetic process"/>
    <property type="evidence" value="ECO:0007669"/>
    <property type="project" value="UniProtKB-UniRule"/>
</dbReference>
<dbReference type="GO" id="GO:0008360">
    <property type="term" value="P:regulation of cell shape"/>
    <property type="evidence" value="ECO:0007669"/>
    <property type="project" value="UniProtKB-KW"/>
</dbReference>
<dbReference type="Gene3D" id="3.90.190.20">
    <property type="entry name" value="Mur ligase, C-terminal domain"/>
    <property type="match status" value="1"/>
</dbReference>
<dbReference type="Gene3D" id="3.40.1190.10">
    <property type="entry name" value="Mur-like, catalytic domain"/>
    <property type="match status" value="1"/>
</dbReference>
<dbReference type="Gene3D" id="3.40.50.720">
    <property type="entry name" value="NAD(P)-binding Rossmann-like Domain"/>
    <property type="match status" value="1"/>
</dbReference>
<dbReference type="HAMAP" id="MF_00639">
    <property type="entry name" value="MurD"/>
    <property type="match status" value="1"/>
</dbReference>
<dbReference type="InterPro" id="IPR036565">
    <property type="entry name" value="Mur-like_cat_sf"/>
</dbReference>
<dbReference type="InterPro" id="IPR004101">
    <property type="entry name" value="Mur_ligase_C"/>
</dbReference>
<dbReference type="InterPro" id="IPR036615">
    <property type="entry name" value="Mur_ligase_C_dom_sf"/>
</dbReference>
<dbReference type="InterPro" id="IPR013221">
    <property type="entry name" value="Mur_ligase_cen"/>
</dbReference>
<dbReference type="InterPro" id="IPR005762">
    <property type="entry name" value="MurD"/>
</dbReference>
<dbReference type="NCBIfam" id="TIGR01087">
    <property type="entry name" value="murD"/>
    <property type="match status" value="1"/>
</dbReference>
<dbReference type="PANTHER" id="PTHR43692">
    <property type="entry name" value="UDP-N-ACETYLMURAMOYLALANINE--D-GLUTAMATE LIGASE"/>
    <property type="match status" value="1"/>
</dbReference>
<dbReference type="PANTHER" id="PTHR43692:SF1">
    <property type="entry name" value="UDP-N-ACETYLMURAMOYLALANINE--D-GLUTAMATE LIGASE"/>
    <property type="match status" value="1"/>
</dbReference>
<dbReference type="Pfam" id="PF02875">
    <property type="entry name" value="Mur_ligase_C"/>
    <property type="match status" value="1"/>
</dbReference>
<dbReference type="Pfam" id="PF08245">
    <property type="entry name" value="Mur_ligase_M"/>
    <property type="match status" value="1"/>
</dbReference>
<dbReference type="Pfam" id="PF21799">
    <property type="entry name" value="MurD-like_N"/>
    <property type="match status" value="1"/>
</dbReference>
<dbReference type="SUPFAM" id="SSF51984">
    <property type="entry name" value="MurCD N-terminal domain"/>
    <property type="match status" value="1"/>
</dbReference>
<dbReference type="SUPFAM" id="SSF53623">
    <property type="entry name" value="MurD-like peptide ligases, catalytic domain"/>
    <property type="match status" value="1"/>
</dbReference>
<dbReference type="SUPFAM" id="SSF53244">
    <property type="entry name" value="MurD-like peptide ligases, peptide-binding domain"/>
    <property type="match status" value="1"/>
</dbReference>